<comment type="function">
    <text evidence="1">Has a role in the initiation of DNA replication. Required at S-phase checkpoint (By similarity).</text>
</comment>
<comment type="subcellular location">
    <subcellularLocation>
        <location>Cytoplasm</location>
    </subcellularLocation>
    <subcellularLocation>
        <location evidence="1">Nucleus</location>
    </subcellularLocation>
</comment>
<comment type="similarity">
    <text evidence="3">Belongs to the SLD2 family.</text>
</comment>
<comment type="sequence caution" evidence="3">
    <conflict type="erroneous gene model prediction">
        <sequence resource="EMBL-CDS" id="EAT89437"/>
    </conflict>
</comment>
<evidence type="ECO:0000250" key="1"/>
<evidence type="ECO:0000256" key="2">
    <source>
        <dbReference type="SAM" id="MobiDB-lite"/>
    </source>
</evidence>
<evidence type="ECO:0000305" key="3"/>
<keyword id="KW-0131">Cell cycle</keyword>
<keyword id="KW-0963">Cytoplasm</keyword>
<keyword id="KW-0235">DNA replication</keyword>
<keyword id="KW-0539">Nucleus</keyword>
<feature type="chain" id="PRO_0000278438" description="DNA replication regulator SLD2">
    <location>
        <begin position="1"/>
        <end position="470"/>
    </location>
</feature>
<feature type="region of interest" description="Disordered" evidence="2">
    <location>
        <begin position="52"/>
        <end position="131"/>
    </location>
</feature>
<feature type="region of interest" description="Disordered" evidence="2">
    <location>
        <begin position="162"/>
        <end position="224"/>
    </location>
</feature>
<feature type="region of interest" description="Disordered" evidence="2">
    <location>
        <begin position="285"/>
        <end position="437"/>
    </location>
</feature>
<feature type="region of interest" description="Disordered" evidence="2">
    <location>
        <begin position="451"/>
        <end position="470"/>
    </location>
</feature>
<feature type="compositionally biased region" description="Polar residues" evidence="2">
    <location>
        <begin position="59"/>
        <end position="70"/>
    </location>
</feature>
<feature type="compositionally biased region" description="Polar residues" evidence="2">
    <location>
        <begin position="162"/>
        <end position="176"/>
    </location>
</feature>
<feature type="compositionally biased region" description="Acidic residues" evidence="2">
    <location>
        <begin position="320"/>
        <end position="330"/>
    </location>
</feature>
<feature type="compositionally biased region" description="Basic residues" evidence="2">
    <location>
        <begin position="337"/>
        <end position="353"/>
    </location>
</feature>
<feature type="compositionally biased region" description="Basic and acidic residues" evidence="2">
    <location>
        <begin position="418"/>
        <end position="431"/>
    </location>
</feature>
<name>SLD2_PHANO</name>
<organism>
    <name type="scientific">Phaeosphaeria nodorum (strain SN15 / ATCC MYA-4574 / FGSC 10173)</name>
    <name type="common">Glume blotch fungus</name>
    <name type="synonym">Parastagonospora nodorum</name>
    <dbReference type="NCBI Taxonomy" id="321614"/>
    <lineage>
        <taxon>Eukaryota</taxon>
        <taxon>Fungi</taxon>
        <taxon>Dikarya</taxon>
        <taxon>Ascomycota</taxon>
        <taxon>Pezizomycotina</taxon>
        <taxon>Dothideomycetes</taxon>
        <taxon>Pleosporomycetidae</taxon>
        <taxon>Pleosporales</taxon>
        <taxon>Pleosporineae</taxon>
        <taxon>Phaeosphaeriaceae</taxon>
        <taxon>Parastagonospora</taxon>
    </lineage>
</organism>
<proteinExistence type="inferred from homology"/>
<accession>Q0UZV8</accession>
<gene>
    <name type="primary">SLD2</name>
    <name type="ORF">SNOG_02706</name>
</gene>
<sequence>MSITETEQRCNELRNDLKLWEKNFAAQNDGRKAGRDDIKANEEISNKYKEYNKLRGKLTAQSAPQTPSKRTASRKATRDAERTPKAAPKYQTSTPLKRKRAEELASEPIPQSPEFLSPQGPSVIGPTPQRDGIVLGLFDMLPAGTPSKRRAVLGDVELNILQTPSRRSQEAASETSLESRARGERTPVSVGKRFMLNQFVTPKKRKMEEEGTPSSTTRGLATPAFLRRGNLLGPIDEADETTPRPAPWKRRGLGRSLSAMIQAMKKDEDDKLDEEADIMREMEMEEAGISMPPKKLRVPQILVEDSQAAMPLGPDRGLETEEDEDEEPELGPDGKPRRVWKKKGLKRQTRRVIMRPNFIKSKLESALQLHDDSEDDQDKVAETQATGHAADDVDSEDDISDYASDVSHTPKQRKVQKKKTEEVKDQPKEGGVKTAARKIKATAHANFRRLKIKSSTGAKGGAKGKFGRRR</sequence>
<reference key="1">
    <citation type="journal article" date="2007" name="Plant Cell">
        <title>Dothideomycete-plant interactions illuminated by genome sequencing and EST analysis of the wheat pathogen Stagonospora nodorum.</title>
        <authorList>
            <person name="Hane J.K."/>
            <person name="Lowe R.G.T."/>
            <person name="Solomon P.S."/>
            <person name="Tan K.-C."/>
            <person name="Schoch C.L."/>
            <person name="Spatafora J.W."/>
            <person name="Crous P.W."/>
            <person name="Kodira C.D."/>
            <person name="Birren B.W."/>
            <person name="Galagan J.E."/>
            <person name="Torriani S.F.F."/>
            <person name="McDonald B.A."/>
            <person name="Oliver R.P."/>
        </authorList>
    </citation>
    <scope>NUCLEOTIDE SEQUENCE [LARGE SCALE GENOMIC DNA]</scope>
    <source>
        <strain>SN15 / ATCC MYA-4574 / FGSC 10173</strain>
    </source>
</reference>
<dbReference type="EMBL" id="CH445328">
    <property type="protein sequence ID" value="EAT89437.2"/>
    <property type="status" value="ALT_SEQ"/>
    <property type="molecule type" value="Genomic_DNA"/>
</dbReference>
<dbReference type="RefSeq" id="XP_001793303.1">
    <property type="nucleotide sequence ID" value="XM_001793251.1"/>
</dbReference>
<dbReference type="SMR" id="Q0UZV8"/>
<dbReference type="FunCoup" id="Q0UZV8">
    <property type="interactions" value="44"/>
</dbReference>
<dbReference type="STRING" id="321614.Q0UZV8"/>
<dbReference type="GeneID" id="5970160"/>
<dbReference type="KEGG" id="pno:SNOG_02706"/>
<dbReference type="VEuPathDB" id="FungiDB:JI435_406650"/>
<dbReference type="eggNOG" id="KOG3151">
    <property type="taxonomic scope" value="Eukaryota"/>
</dbReference>
<dbReference type="InParanoid" id="Q0UZV8"/>
<dbReference type="OMA" id="AVRMPQK"/>
<dbReference type="OrthoDB" id="8775810at2759"/>
<dbReference type="Proteomes" id="UP000001055">
    <property type="component" value="Unassembled WGS sequence"/>
</dbReference>
<dbReference type="GO" id="GO:0005737">
    <property type="term" value="C:cytoplasm"/>
    <property type="evidence" value="ECO:0007669"/>
    <property type="project" value="UniProtKB-SubCell"/>
</dbReference>
<dbReference type="GO" id="GO:0031261">
    <property type="term" value="C:DNA replication preinitiation complex"/>
    <property type="evidence" value="ECO:0000318"/>
    <property type="project" value="GO_Central"/>
</dbReference>
<dbReference type="GO" id="GO:0003688">
    <property type="term" value="F:DNA replication origin binding"/>
    <property type="evidence" value="ECO:0000318"/>
    <property type="project" value="GO_Central"/>
</dbReference>
<dbReference type="GO" id="GO:0003697">
    <property type="term" value="F:single-stranded DNA binding"/>
    <property type="evidence" value="ECO:0000318"/>
    <property type="project" value="GO_Central"/>
</dbReference>
<dbReference type="GO" id="GO:0006270">
    <property type="term" value="P:DNA replication initiation"/>
    <property type="evidence" value="ECO:0000318"/>
    <property type="project" value="GO_Central"/>
</dbReference>
<dbReference type="GO" id="GO:0000727">
    <property type="term" value="P:double-strand break repair via break-induced replication"/>
    <property type="evidence" value="ECO:0000318"/>
    <property type="project" value="GO_Central"/>
</dbReference>
<dbReference type="GO" id="GO:1902977">
    <property type="term" value="P:mitotic DNA replication preinitiation complex assembly"/>
    <property type="evidence" value="ECO:0000318"/>
    <property type="project" value="GO_Central"/>
</dbReference>
<dbReference type="CDD" id="cd22289">
    <property type="entry name" value="RecQL4_SLD2_NTD"/>
    <property type="match status" value="1"/>
</dbReference>
<dbReference type="FunFam" id="1.10.10.1460:FF:000001">
    <property type="entry name" value="DNA replication regulator Sld2"/>
    <property type="match status" value="1"/>
</dbReference>
<dbReference type="Gene3D" id="1.10.10.1460">
    <property type="match status" value="1"/>
</dbReference>
<dbReference type="InterPro" id="IPR021110">
    <property type="entry name" value="DNA_rep_checkpnt_protein"/>
</dbReference>
<dbReference type="InterPro" id="IPR040203">
    <property type="entry name" value="Sld2"/>
</dbReference>
<dbReference type="PANTHER" id="PTHR28124">
    <property type="entry name" value="DNA REPLICATION REGULATOR SLD2"/>
    <property type="match status" value="1"/>
</dbReference>
<dbReference type="PANTHER" id="PTHR28124:SF1">
    <property type="entry name" value="DNA REPLICATION REGULATOR SLD2"/>
    <property type="match status" value="1"/>
</dbReference>
<dbReference type="Pfam" id="PF11719">
    <property type="entry name" value="Drc1-Sld2"/>
    <property type="match status" value="1"/>
</dbReference>
<protein>
    <recommendedName>
        <fullName>DNA replication regulator SLD2</fullName>
    </recommendedName>
</protein>